<evidence type="ECO:0000255" key="1">
    <source>
        <dbReference type="HAMAP-Rule" id="MF_00303"/>
    </source>
</evidence>
<reference key="1">
    <citation type="submission" date="2007-11" db="EMBL/GenBank/DDBJ databases">
        <authorList>
            <consortium name="The Salmonella enterica serovar Arizonae Genome Sequencing Project"/>
            <person name="McClelland M."/>
            <person name="Sanderson E.K."/>
            <person name="Porwollik S."/>
            <person name="Spieth J."/>
            <person name="Clifton W.S."/>
            <person name="Fulton R."/>
            <person name="Chunyan W."/>
            <person name="Wollam A."/>
            <person name="Shah N."/>
            <person name="Pepin K."/>
            <person name="Bhonagiri V."/>
            <person name="Nash W."/>
            <person name="Johnson M."/>
            <person name="Thiruvilangam P."/>
            <person name="Wilson R."/>
        </authorList>
    </citation>
    <scope>NUCLEOTIDE SEQUENCE [LARGE SCALE GENOMIC DNA]</scope>
    <source>
        <strain>ATCC BAA-731 / CDC346-86 / RSK2980</strain>
    </source>
</reference>
<feature type="chain" id="PRO_1000079054" description="Trigger factor">
    <location>
        <begin position="1"/>
        <end position="432"/>
    </location>
</feature>
<feature type="domain" description="PPIase FKBP-type" evidence="1">
    <location>
        <begin position="161"/>
        <end position="246"/>
    </location>
</feature>
<sequence>MQVSVETTQGLGRRVTITIAADSIETAVKSELVNVAKKVRIDGFRKGKVPMNIVAQRYGASVRQDVLGDLMSRNFVDAIIKEKINPAGAPNYVPGEYKVGEDFTYSVEFEVYPEVELTGLESIEVEKPVVEVTDADVDVMLDTLRKQQATWKEKDGAADAEDRVTLDFTGTVDGEEFEGGKATDFVLAMGQGRMIPGFEDGVKGHKVGEEFTIDVTFPEEYHAENLKGKAAKFAINLKKVEERELPELTEEFIKRFGVEDGSVAGLRAEVRKNMERELKGAVRNRVKSQAIEGLVKANDIDVPSALIDSEIDVLRRQAAQRFGGNEKQALELPRELFEEQAKRRVVVGLLLGEVIRTNELKADEVRVKGLIEEMASAYEDPKEVIEFYSKNKELMDNMRNVALEEQAIEAVLAKAKVSEKATSFNELMNQQA</sequence>
<proteinExistence type="inferred from homology"/>
<organism>
    <name type="scientific">Salmonella arizonae (strain ATCC BAA-731 / CDC346-86 / RSK2980)</name>
    <dbReference type="NCBI Taxonomy" id="41514"/>
    <lineage>
        <taxon>Bacteria</taxon>
        <taxon>Pseudomonadati</taxon>
        <taxon>Pseudomonadota</taxon>
        <taxon>Gammaproteobacteria</taxon>
        <taxon>Enterobacterales</taxon>
        <taxon>Enterobacteriaceae</taxon>
        <taxon>Salmonella</taxon>
    </lineage>
</organism>
<protein>
    <recommendedName>
        <fullName evidence="1">Trigger factor</fullName>
        <shortName evidence="1">TF</shortName>
        <ecNumber evidence="1">5.2.1.8</ecNumber>
    </recommendedName>
    <alternativeName>
        <fullName evidence="1">PPIase</fullName>
    </alternativeName>
</protein>
<name>TIG_SALAR</name>
<gene>
    <name evidence="1" type="primary">tig</name>
    <name type="ordered locus">SARI_02487</name>
</gene>
<comment type="function">
    <text evidence="1">Involved in protein export. Acts as a chaperone by maintaining the newly synthesized protein in an open conformation. Functions as a peptidyl-prolyl cis-trans isomerase.</text>
</comment>
<comment type="catalytic activity">
    <reaction evidence="1">
        <text>[protein]-peptidylproline (omega=180) = [protein]-peptidylproline (omega=0)</text>
        <dbReference type="Rhea" id="RHEA:16237"/>
        <dbReference type="Rhea" id="RHEA-COMP:10747"/>
        <dbReference type="Rhea" id="RHEA-COMP:10748"/>
        <dbReference type="ChEBI" id="CHEBI:83833"/>
        <dbReference type="ChEBI" id="CHEBI:83834"/>
        <dbReference type="EC" id="5.2.1.8"/>
    </reaction>
</comment>
<comment type="subcellular location">
    <subcellularLocation>
        <location>Cytoplasm</location>
    </subcellularLocation>
    <text evidence="1">About half TF is bound to the ribosome near the polypeptide exit tunnel while the other half is free in the cytoplasm.</text>
</comment>
<comment type="domain">
    <text evidence="1">Consists of 3 domains; the N-terminus binds the ribosome, the middle domain has PPIase activity, while the C-terminus has intrinsic chaperone activity on its own.</text>
</comment>
<comment type="similarity">
    <text evidence="1">Belongs to the FKBP-type PPIase family. Tig subfamily.</text>
</comment>
<accession>A9MM24</accession>
<dbReference type="EC" id="5.2.1.8" evidence="1"/>
<dbReference type="EMBL" id="CP000880">
    <property type="protein sequence ID" value="ABX22346.1"/>
    <property type="molecule type" value="Genomic_DNA"/>
</dbReference>
<dbReference type="BMRB" id="A9MM24"/>
<dbReference type="SMR" id="A9MM24"/>
<dbReference type="STRING" id="41514.SARI_02487"/>
<dbReference type="KEGG" id="ses:SARI_02487"/>
<dbReference type="HOGENOM" id="CLU_033058_2_0_6"/>
<dbReference type="Proteomes" id="UP000002084">
    <property type="component" value="Chromosome"/>
</dbReference>
<dbReference type="GO" id="GO:0005737">
    <property type="term" value="C:cytoplasm"/>
    <property type="evidence" value="ECO:0007669"/>
    <property type="project" value="UniProtKB-SubCell"/>
</dbReference>
<dbReference type="GO" id="GO:0003755">
    <property type="term" value="F:peptidyl-prolyl cis-trans isomerase activity"/>
    <property type="evidence" value="ECO:0007669"/>
    <property type="project" value="UniProtKB-UniRule"/>
</dbReference>
<dbReference type="GO" id="GO:0044183">
    <property type="term" value="F:protein folding chaperone"/>
    <property type="evidence" value="ECO:0007669"/>
    <property type="project" value="TreeGrafter"/>
</dbReference>
<dbReference type="GO" id="GO:0043022">
    <property type="term" value="F:ribosome binding"/>
    <property type="evidence" value="ECO:0007669"/>
    <property type="project" value="TreeGrafter"/>
</dbReference>
<dbReference type="GO" id="GO:0051083">
    <property type="term" value="P:'de novo' cotranslational protein folding"/>
    <property type="evidence" value="ECO:0007669"/>
    <property type="project" value="TreeGrafter"/>
</dbReference>
<dbReference type="GO" id="GO:0051301">
    <property type="term" value="P:cell division"/>
    <property type="evidence" value="ECO:0007669"/>
    <property type="project" value="UniProtKB-KW"/>
</dbReference>
<dbReference type="GO" id="GO:0061077">
    <property type="term" value="P:chaperone-mediated protein folding"/>
    <property type="evidence" value="ECO:0007669"/>
    <property type="project" value="TreeGrafter"/>
</dbReference>
<dbReference type="GO" id="GO:0015031">
    <property type="term" value="P:protein transport"/>
    <property type="evidence" value="ECO:0007669"/>
    <property type="project" value="UniProtKB-UniRule"/>
</dbReference>
<dbReference type="GO" id="GO:0043335">
    <property type="term" value="P:protein unfolding"/>
    <property type="evidence" value="ECO:0007669"/>
    <property type="project" value="TreeGrafter"/>
</dbReference>
<dbReference type="FunFam" id="1.10.3120.10:FF:000001">
    <property type="entry name" value="Trigger factor"/>
    <property type="match status" value="1"/>
</dbReference>
<dbReference type="FunFam" id="3.10.50.40:FF:000001">
    <property type="entry name" value="Trigger factor"/>
    <property type="match status" value="1"/>
</dbReference>
<dbReference type="FunFam" id="3.30.70.1050:FF:000001">
    <property type="entry name" value="Trigger factor"/>
    <property type="match status" value="1"/>
</dbReference>
<dbReference type="Gene3D" id="3.10.50.40">
    <property type="match status" value="1"/>
</dbReference>
<dbReference type="Gene3D" id="3.30.70.1050">
    <property type="entry name" value="Trigger factor ribosome-binding domain"/>
    <property type="match status" value="1"/>
</dbReference>
<dbReference type="Gene3D" id="1.10.3120.10">
    <property type="entry name" value="Trigger factor, C-terminal domain"/>
    <property type="match status" value="1"/>
</dbReference>
<dbReference type="HAMAP" id="MF_00303">
    <property type="entry name" value="Trigger_factor_Tig"/>
    <property type="match status" value="1"/>
</dbReference>
<dbReference type="InterPro" id="IPR046357">
    <property type="entry name" value="PPIase_dom_sf"/>
</dbReference>
<dbReference type="InterPro" id="IPR001179">
    <property type="entry name" value="PPIase_FKBP_dom"/>
</dbReference>
<dbReference type="InterPro" id="IPR005215">
    <property type="entry name" value="Trig_fac"/>
</dbReference>
<dbReference type="InterPro" id="IPR008880">
    <property type="entry name" value="Trigger_fac_C"/>
</dbReference>
<dbReference type="InterPro" id="IPR037041">
    <property type="entry name" value="Trigger_fac_C_sf"/>
</dbReference>
<dbReference type="InterPro" id="IPR008881">
    <property type="entry name" value="Trigger_fac_ribosome-bd_bac"/>
</dbReference>
<dbReference type="InterPro" id="IPR036611">
    <property type="entry name" value="Trigger_fac_ribosome-bd_sf"/>
</dbReference>
<dbReference type="InterPro" id="IPR027304">
    <property type="entry name" value="Trigger_fact/SurA_dom_sf"/>
</dbReference>
<dbReference type="NCBIfam" id="TIGR00115">
    <property type="entry name" value="tig"/>
    <property type="match status" value="1"/>
</dbReference>
<dbReference type="PANTHER" id="PTHR30560">
    <property type="entry name" value="TRIGGER FACTOR CHAPERONE AND PEPTIDYL-PROLYL CIS/TRANS ISOMERASE"/>
    <property type="match status" value="1"/>
</dbReference>
<dbReference type="PANTHER" id="PTHR30560:SF3">
    <property type="entry name" value="TRIGGER FACTOR-LIKE PROTEIN TIG, CHLOROPLASTIC"/>
    <property type="match status" value="1"/>
</dbReference>
<dbReference type="Pfam" id="PF00254">
    <property type="entry name" value="FKBP_C"/>
    <property type="match status" value="1"/>
</dbReference>
<dbReference type="Pfam" id="PF05698">
    <property type="entry name" value="Trigger_C"/>
    <property type="match status" value="1"/>
</dbReference>
<dbReference type="Pfam" id="PF05697">
    <property type="entry name" value="Trigger_N"/>
    <property type="match status" value="1"/>
</dbReference>
<dbReference type="PIRSF" id="PIRSF003095">
    <property type="entry name" value="Trigger_factor"/>
    <property type="match status" value="1"/>
</dbReference>
<dbReference type="SUPFAM" id="SSF54534">
    <property type="entry name" value="FKBP-like"/>
    <property type="match status" value="1"/>
</dbReference>
<dbReference type="SUPFAM" id="SSF109998">
    <property type="entry name" value="Triger factor/SurA peptide-binding domain-like"/>
    <property type="match status" value="1"/>
</dbReference>
<dbReference type="SUPFAM" id="SSF102735">
    <property type="entry name" value="Trigger factor ribosome-binding domain"/>
    <property type="match status" value="1"/>
</dbReference>
<dbReference type="PROSITE" id="PS50059">
    <property type="entry name" value="FKBP_PPIASE"/>
    <property type="match status" value="1"/>
</dbReference>
<keyword id="KW-0131">Cell cycle</keyword>
<keyword id="KW-0132">Cell division</keyword>
<keyword id="KW-0143">Chaperone</keyword>
<keyword id="KW-0963">Cytoplasm</keyword>
<keyword id="KW-0413">Isomerase</keyword>
<keyword id="KW-1185">Reference proteome</keyword>
<keyword id="KW-0697">Rotamase</keyword>